<sequence length="423" mass="48784">MSYVIDRRLNGKNKSTVNRQRFLRRYREHIKKAVEEAVSRRSITDMEHGEQISIPGRDIDEPVLHHGRGGRQTVVHPGNKEFTAGEHIARPSGGGGGRGGGKASNSGEGMDDFVFQITQEEFLDFMFEDLELPNLVKRHITGTDTFKTIRAGISNDGNPSRINIVRTLRSAHARRIALSGGSRAKLRAALKELERIRREEPDNLGDIQELELEIAKLRARIDRVPFLDTFDLKYNLLVKQPNPTSKAVMFCLMDVSGSMTQATKDIAKRFFILLYLFLKRNYEKIEVVFIRHHTSAREVDEEEFFYSRETGGTIVSSALKMMQEIMAERYPTHEWNIYAAQASDGDNWNDDSPVCRDILLKQIMPFVQYYTYVEITPREHQALWFEYERVREAFEDSFAQQQIVSASDIYPVFRELFQRRLVA</sequence>
<comment type="similarity">
    <text evidence="1">Belongs to the UPF0229 family.</text>
</comment>
<name>Y730_PSEP7</name>
<reference key="1">
    <citation type="submission" date="2007-06" db="EMBL/GenBank/DDBJ databases">
        <authorList>
            <person name="Dodson R.J."/>
            <person name="Harkins D."/>
            <person name="Paulsen I.T."/>
        </authorList>
    </citation>
    <scope>NUCLEOTIDE SEQUENCE [LARGE SCALE GENOMIC DNA]</scope>
    <source>
        <strain>DSM 24068 / PA7</strain>
    </source>
</reference>
<gene>
    <name type="ordered locus">PSPA7_0730</name>
</gene>
<accession>A6UZ90</accession>
<dbReference type="EMBL" id="CP000744">
    <property type="protein sequence ID" value="ABR85430.1"/>
    <property type="molecule type" value="Genomic_DNA"/>
</dbReference>
<dbReference type="RefSeq" id="WP_012074171.1">
    <property type="nucleotide sequence ID" value="NC_009656.1"/>
</dbReference>
<dbReference type="SMR" id="A6UZ90"/>
<dbReference type="GeneID" id="77219107"/>
<dbReference type="KEGG" id="pap:PSPA7_0730"/>
<dbReference type="HOGENOM" id="CLU_049702_0_0_6"/>
<dbReference type="Proteomes" id="UP000001582">
    <property type="component" value="Chromosome"/>
</dbReference>
<dbReference type="HAMAP" id="MF_01232">
    <property type="entry name" value="UPF0229"/>
    <property type="match status" value="1"/>
</dbReference>
<dbReference type="InterPro" id="IPR006698">
    <property type="entry name" value="UPF0229"/>
</dbReference>
<dbReference type="NCBIfam" id="NF003707">
    <property type="entry name" value="PRK05325.1-2"/>
    <property type="match status" value="1"/>
</dbReference>
<dbReference type="NCBIfam" id="NF003708">
    <property type="entry name" value="PRK05325.1-3"/>
    <property type="match status" value="1"/>
</dbReference>
<dbReference type="PANTHER" id="PTHR30510">
    <property type="entry name" value="UPF0229 PROTEIN YEAH"/>
    <property type="match status" value="1"/>
</dbReference>
<dbReference type="PANTHER" id="PTHR30510:SF2">
    <property type="entry name" value="UPF0229 PROTEIN YEAH"/>
    <property type="match status" value="1"/>
</dbReference>
<dbReference type="Pfam" id="PF04285">
    <property type="entry name" value="DUF444"/>
    <property type="match status" value="1"/>
</dbReference>
<proteinExistence type="inferred from homology"/>
<protein>
    <recommendedName>
        <fullName evidence="1">UPF0229 protein PSPA7_0730</fullName>
    </recommendedName>
</protein>
<feature type="chain" id="PRO_1000066868" description="UPF0229 protein PSPA7_0730">
    <location>
        <begin position="1"/>
        <end position="423"/>
    </location>
</feature>
<feature type="region of interest" description="Disordered" evidence="2">
    <location>
        <begin position="84"/>
        <end position="107"/>
    </location>
</feature>
<feature type="compositionally biased region" description="Gly residues" evidence="2">
    <location>
        <begin position="92"/>
        <end position="102"/>
    </location>
</feature>
<organism>
    <name type="scientific">Pseudomonas paraeruginosa (strain DSM 24068 / PA7)</name>
    <name type="common">Pseudomonas aeruginosa (strain PA7)</name>
    <dbReference type="NCBI Taxonomy" id="381754"/>
    <lineage>
        <taxon>Bacteria</taxon>
        <taxon>Pseudomonadati</taxon>
        <taxon>Pseudomonadota</taxon>
        <taxon>Gammaproteobacteria</taxon>
        <taxon>Pseudomonadales</taxon>
        <taxon>Pseudomonadaceae</taxon>
        <taxon>Pseudomonas</taxon>
        <taxon>Pseudomonas paraeruginosa</taxon>
    </lineage>
</organism>
<evidence type="ECO:0000255" key="1">
    <source>
        <dbReference type="HAMAP-Rule" id="MF_01232"/>
    </source>
</evidence>
<evidence type="ECO:0000256" key="2">
    <source>
        <dbReference type="SAM" id="MobiDB-lite"/>
    </source>
</evidence>